<dbReference type="EC" id="3.1.1.-"/>
<dbReference type="EMBL" id="AC003040">
    <property type="protein sequence ID" value="AAC23769.1"/>
    <property type="molecule type" value="Genomic_DNA"/>
</dbReference>
<dbReference type="EMBL" id="CP002685">
    <property type="protein sequence ID" value="AEC07463.1"/>
    <property type="molecule type" value="Genomic_DNA"/>
</dbReference>
<dbReference type="EMBL" id="AY099614">
    <property type="protein sequence ID" value="AAM20465.1"/>
    <property type="molecule type" value="mRNA"/>
</dbReference>
<dbReference type="EMBL" id="AY128861">
    <property type="protein sequence ID" value="AAM91261.1"/>
    <property type="molecule type" value="mRNA"/>
</dbReference>
<dbReference type="PIR" id="T01143">
    <property type="entry name" value="T01143"/>
</dbReference>
<dbReference type="RefSeq" id="NP_179935.1">
    <property type="nucleotide sequence ID" value="NM_127918.4"/>
</dbReference>
<dbReference type="SMR" id="O80470"/>
<dbReference type="FunCoup" id="O80470">
    <property type="interactions" value="255"/>
</dbReference>
<dbReference type="STRING" id="3702.O80470"/>
<dbReference type="GlyGen" id="O80470">
    <property type="glycosylation" value="4 sites"/>
</dbReference>
<dbReference type="PaxDb" id="3702-AT2G23540.1"/>
<dbReference type="ProteomicsDB" id="221975"/>
<dbReference type="EnsemblPlants" id="AT2G23540.1">
    <property type="protein sequence ID" value="AT2G23540.1"/>
    <property type="gene ID" value="AT2G23540"/>
</dbReference>
<dbReference type="GeneID" id="816886"/>
<dbReference type="Gramene" id="AT2G23540.1">
    <property type="protein sequence ID" value="AT2G23540.1"/>
    <property type="gene ID" value="AT2G23540"/>
</dbReference>
<dbReference type="KEGG" id="ath:AT2G23540"/>
<dbReference type="Araport" id="AT2G23540"/>
<dbReference type="TAIR" id="AT2G23540"/>
<dbReference type="eggNOG" id="ENOG502QTV6">
    <property type="taxonomic scope" value="Eukaryota"/>
</dbReference>
<dbReference type="HOGENOM" id="CLU_015101_0_0_1"/>
<dbReference type="InParanoid" id="O80470"/>
<dbReference type="OMA" id="PNYAIPF"/>
<dbReference type="PhylomeDB" id="O80470"/>
<dbReference type="BioCyc" id="ARA:AT2G23540-MONOMER"/>
<dbReference type="PRO" id="PR:O80470"/>
<dbReference type="Proteomes" id="UP000006548">
    <property type="component" value="Chromosome 2"/>
</dbReference>
<dbReference type="ExpressionAtlas" id="O80470">
    <property type="expression patterns" value="baseline and differential"/>
</dbReference>
<dbReference type="GO" id="GO:0005576">
    <property type="term" value="C:extracellular region"/>
    <property type="evidence" value="ECO:0007669"/>
    <property type="project" value="UniProtKB-SubCell"/>
</dbReference>
<dbReference type="GO" id="GO:0016788">
    <property type="term" value="F:hydrolase activity, acting on ester bonds"/>
    <property type="evidence" value="ECO:0007669"/>
    <property type="project" value="InterPro"/>
</dbReference>
<dbReference type="GO" id="GO:0016042">
    <property type="term" value="P:lipid catabolic process"/>
    <property type="evidence" value="ECO:0007669"/>
    <property type="project" value="UniProtKB-KW"/>
</dbReference>
<dbReference type="CDD" id="cd01837">
    <property type="entry name" value="SGNH_plant_lipase_like"/>
    <property type="match status" value="1"/>
</dbReference>
<dbReference type="Gene3D" id="3.40.50.1110">
    <property type="entry name" value="SGNH hydrolase"/>
    <property type="match status" value="1"/>
</dbReference>
<dbReference type="InterPro" id="IPR001087">
    <property type="entry name" value="GDSL"/>
</dbReference>
<dbReference type="InterPro" id="IPR051058">
    <property type="entry name" value="GDSL_Est/Lipase"/>
</dbReference>
<dbReference type="InterPro" id="IPR036514">
    <property type="entry name" value="SGNH_hydro_sf"/>
</dbReference>
<dbReference type="InterPro" id="IPR035669">
    <property type="entry name" value="SGNH_plant_lipase-like"/>
</dbReference>
<dbReference type="PANTHER" id="PTHR45648:SF1">
    <property type="entry name" value="GDSL ESTERASE_LIPASE"/>
    <property type="match status" value="1"/>
</dbReference>
<dbReference type="PANTHER" id="PTHR45648">
    <property type="entry name" value="GDSL LIPASE/ACYLHYDROLASE FAMILY PROTEIN (AFU_ORTHOLOGUE AFUA_4G14700)"/>
    <property type="match status" value="1"/>
</dbReference>
<dbReference type="Pfam" id="PF00657">
    <property type="entry name" value="Lipase_GDSL"/>
    <property type="match status" value="1"/>
</dbReference>
<dbReference type="SUPFAM" id="SSF52266">
    <property type="entry name" value="SGNH hydrolase"/>
    <property type="match status" value="1"/>
</dbReference>
<sequence length="387" mass="42083">MATRASTSSRVSPAFTFLVIFFLLSLTASVEAAGRGVNNDKKGGGLGASFIFGDSLVDAGNNNYLSTLSRANMKPNGIDFKASGGTPTGRFTNGRTIGDIVGEELGSANYAIPFLAPDAKGKALLAGVNYASGGGGIMNATGRIFVNRLGMDVQVDFFNTTRKQFDDLLGKEKAKDYIAKKSIFSITIGANDFLNNYLFPLLSVGTRFTQTPDDFIGDMLEHLRDQLTRLYQLDARKFVIGNVGPIGCIPYQKTINQLDENECVDLANKLANQYNVRLKSLLEELNKKLPGAMFVHANVYDLVMELITNYDKYGFKSATKACCGNGGQYAGIIPCGPTSSLCEERDKYVFWDPYHPSEAANVIIAKQLLYGDVKVISPVNLSKLRDM</sequence>
<comment type="subcellular location">
    <subcellularLocation>
        <location evidence="3">Secreted</location>
    </subcellularLocation>
</comment>
<comment type="similarity">
    <text evidence="3">Belongs to the 'GDSL' lipolytic enzyme family.</text>
</comment>
<keyword id="KW-0325">Glycoprotein</keyword>
<keyword id="KW-0378">Hydrolase</keyword>
<keyword id="KW-0442">Lipid degradation</keyword>
<keyword id="KW-0443">Lipid metabolism</keyword>
<keyword id="KW-1185">Reference proteome</keyword>
<keyword id="KW-0964">Secreted</keyword>
<keyword id="KW-0732">Signal</keyword>
<evidence type="ECO:0000250" key="1"/>
<evidence type="ECO:0000255" key="2"/>
<evidence type="ECO:0000305" key="3"/>
<organism>
    <name type="scientific">Arabidopsis thaliana</name>
    <name type="common">Mouse-ear cress</name>
    <dbReference type="NCBI Taxonomy" id="3702"/>
    <lineage>
        <taxon>Eukaryota</taxon>
        <taxon>Viridiplantae</taxon>
        <taxon>Streptophyta</taxon>
        <taxon>Embryophyta</taxon>
        <taxon>Tracheophyta</taxon>
        <taxon>Spermatophyta</taxon>
        <taxon>Magnoliopsida</taxon>
        <taxon>eudicotyledons</taxon>
        <taxon>Gunneridae</taxon>
        <taxon>Pentapetalae</taxon>
        <taxon>rosids</taxon>
        <taxon>malvids</taxon>
        <taxon>Brassicales</taxon>
        <taxon>Brassicaceae</taxon>
        <taxon>Camelineae</taxon>
        <taxon>Arabidopsis</taxon>
    </lineage>
</organism>
<proteinExistence type="evidence at transcript level"/>
<name>GDL38_ARATH</name>
<protein>
    <recommendedName>
        <fullName>GDSL esterase/lipase At2g23540</fullName>
        <ecNumber>3.1.1.-</ecNumber>
    </recommendedName>
    <alternativeName>
        <fullName>Extracellular lipase At2g23540</fullName>
    </alternativeName>
</protein>
<accession>O80470</accession>
<reference key="1">
    <citation type="journal article" date="1999" name="Nature">
        <title>Sequence and analysis of chromosome 2 of the plant Arabidopsis thaliana.</title>
        <authorList>
            <person name="Lin X."/>
            <person name="Kaul S."/>
            <person name="Rounsley S.D."/>
            <person name="Shea T.P."/>
            <person name="Benito M.-I."/>
            <person name="Town C.D."/>
            <person name="Fujii C.Y."/>
            <person name="Mason T.M."/>
            <person name="Bowman C.L."/>
            <person name="Barnstead M.E."/>
            <person name="Feldblyum T.V."/>
            <person name="Buell C.R."/>
            <person name="Ketchum K.A."/>
            <person name="Lee J.J."/>
            <person name="Ronning C.M."/>
            <person name="Koo H.L."/>
            <person name="Moffat K.S."/>
            <person name="Cronin L.A."/>
            <person name="Shen M."/>
            <person name="Pai G."/>
            <person name="Van Aken S."/>
            <person name="Umayam L."/>
            <person name="Tallon L.J."/>
            <person name="Gill J.E."/>
            <person name="Adams M.D."/>
            <person name="Carrera A.J."/>
            <person name="Creasy T.H."/>
            <person name="Goodman H.M."/>
            <person name="Somerville C.R."/>
            <person name="Copenhaver G.P."/>
            <person name="Preuss D."/>
            <person name="Nierman W.C."/>
            <person name="White O."/>
            <person name="Eisen J.A."/>
            <person name="Salzberg S.L."/>
            <person name="Fraser C.M."/>
            <person name="Venter J.C."/>
        </authorList>
    </citation>
    <scope>NUCLEOTIDE SEQUENCE [LARGE SCALE GENOMIC DNA]</scope>
    <source>
        <strain>cv. Columbia</strain>
    </source>
</reference>
<reference key="2">
    <citation type="journal article" date="2017" name="Plant J.">
        <title>Araport11: a complete reannotation of the Arabidopsis thaliana reference genome.</title>
        <authorList>
            <person name="Cheng C.Y."/>
            <person name="Krishnakumar V."/>
            <person name="Chan A.P."/>
            <person name="Thibaud-Nissen F."/>
            <person name="Schobel S."/>
            <person name="Town C.D."/>
        </authorList>
    </citation>
    <scope>GENOME REANNOTATION</scope>
    <source>
        <strain>cv. Columbia</strain>
    </source>
</reference>
<reference key="3">
    <citation type="journal article" date="2003" name="Science">
        <title>Empirical analysis of transcriptional activity in the Arabidopsis genome.</title>
        <authorList>
            <person name="Yamada K."/>
            <person name="Lim J."/>
            <person name="Dale J.M."/>
            <person name="Chen H."/>
            <person name="Shinn P."/>
            <person name="Palm C.J."/>
            <person name="Southwick A.M."/>
            <person name="Wu H.C."/>
            <person name="Kim C.J."/>
            <person name="Nguyen M."/>
            <person name="Pham P.K."/>
            <person name="Cheuk R.F."/>
            <person name="Karlin-Newmann G."/>
            <person name="Liu S.X."/>
            <person name="Lam B."/>
            <person name="Sakano H."/>
            <person name="Wu T."/>
            <person name="Yu G."/>
            <person name="Miranda M."/>
            <person name="Quach H.L."/>
            <person name="Tripp M."/>
            <person name="Chang C.H."/>
            <person name="Lee J.M."/>
            <person name="Toriumi M.J."/>
            <person name="Chan M.M."/>
            <person name="Tang C.C."/>
            <person name="Onodera C.S."/>
            <person name="Deng J.M."/>
            <person name="Akiyama K."/>
            <person name="Ansari Y."/>
            <person name="Arakawa T."/>
            <person name="Banh J."/>
            <person name="Banno F."/>
            <person name="Bowser L."/>
            <person name="Brooks S.Y."/>
            <person name="Carninci P."/>
            <person name="Chao Q."/>
            <person name="Choy N."/>
            <person name="Enju A."/>
            <person name="Goldsmith A.D."/>
            <person name="Gurjal M."/>
            <person name="Hansen N.F."/>
            <person name="Hayashizaki Y."/>
            <person name="Johnson-Hopson C."/>
            <person name="Hsuan V.W."/>
            <person name="Iida K."/>
            <person name="Karnes M."/>
            <person name="Khan S."/>
            <person name="Koesema E."/>
            <person name="Ishida J."/>
            <person name="Jiang P.X."/>
            <person name="Jones T."/>
            <person name="Kawai J."/>
            <person name="Kamiya A."/>
            <person name="Meyers C."/>
            <person name="Nakajima M."/>
            <person name="Narusaka M."/>
            <person name="Seki M."/>
            <person name="Sakurai T."/>
            <person name="Satou M."/>
            <person name="Tamse R."/>
            <person name="Vaysberg M."/>
            <person name="Wallender E.K."/>
            <person name="Wong C."/>
            <person name="Yamamura Y."/>
            <person name="Yuan S."/>
            <person name="Shinozaki K."/>
            <person name="Davis R.W."/>
            <person name="Theologis A."/>
            <person name="Ecker J.R."/>
        </authorList>
    </citation>
    <scope>NUCLEOTIDE SEQUENCE [LARGE SCALE MRNA]</scope>
    <source>
        <strain>cv. Columbia</strain>
    </source>
</reference>
<reference key="4">
    <citation type="journal article" date="2004" name="Prog. Lipid Res.">
        <title>GDSL family of serine esterases/lipases.</title>
        <authorList>
            <person name="Akoh C.C."/>
            <person name="Lee G.-C."/>
            <person name="Liaw Y.-C."/>
            <person name="Huang T.-H."/>
            <person name="Shaw J.-F."/>
        </authorList>
    </citation>
    <scope>REVIEW</scope>
</reference>
<reference key="5">
    <citation type="journal article" date="2008" name="Pak. J. Biol. Sci.">
        <title>Sequence analysis of GDSL lipase gene family in Arabidopsis thaliana.</title>
        <authorList>
            <person name="Ling H."/>
        </authorList>
    </citation>
    <scope>GENE FAMILY</scope>
</reference>
<feature type="signal peptide" evidence="2">
    <location>
        <begin position="1"/>
        <end position="32"/>
    </location>
</feature>
<feature type="chain" id="PRO_0000367379" description="GDSL esterase/lipase At2g23540">
    <location>
        <begin position="33"/>
        <end position="387"/>
    </location>
</feature>
<feature type="active site" description="Nucleophile" evidence="1">
    <location>
        <position position="55"/>
    </location>
</feature>
<feature type="active site" evidence="1">
    <location>
        <position position="352"/>
    </location>
</feature>
<feature type="active site" evidence="1">
    <location>
        <position position="355"/>
    </location>
</feature>
<feature type="glycosylation site" description="N-linked (GlcNAc...) asparagine" evidence="2">
    <location>
        <position position="139"/>
    </location>
</feature>
<feature type="glycosylation site" description="N-linked (GlcNAc...) asparagine" evidence="2">
    <location>
        <position position="159"/>
    </location>
</feature>
<feature type="glycosylation site" description="N-linked (GlcNAc...) asparagine" evidence="2">
    <location>
        <position position="380"/>
    </location>
</feature>
<gene>
    <name type="ordered locus">At2g23540</name>
    <name type="ORF">F26B6.19</name>
</gene>